<feature type="chain" id="PRO_0000411355" description="tRNA uridine 5-carboxymethylaminomethyl modification enzyme MnmG">
    <location>
        <begin position="1"/>
        <end position="632"/>
    </location>
</feature>
<feature type="binding site" evidence="1">
    <location>
        <begin position="15"/>
        <end position="20"/>
    </location>
    <ligand>
        <name>FAD</name>
        <dbReference type="ChEBI" id="CHEBI:57692"/>
    </ligand>
</feature>
<feature type="binding site" evidence="1">
    <location>
        <position position="127"/>
    </location>
    <ligand>
        <name>FAD</name>
        <dbReference type="ChEBI" id="CHEBI:57692"/>
    </ligand>
</feature>
<feature type="binding site" evidence="1">
    <location>
        <position position="182"/>
    </location>
    <ligand>
        <name>FAD</name>
        <dbReference type="ChEBI" id="CHEBI:57692"/>
    </ligand>
</feature>
<feature type="binding site" evidence="1">
    <location>
        <begin position="276"/>
        <end position="290"/>
    </location>
    <ligand>
        <name>NAD(+)</name>
        <dbReference type="ChEBI" id="CHEBI:57540"/>
    </ligand>
</feature>
<feature type="binding site" evidence="1">
    <location>
        <position position="373"/>
    </location>
    <ligand>
        <name>FAD</name>
        <dbReference type="ChEBI" id="CHEBI:57692"/>
    </ligand>
</feature>
<name>MNMG_STRPQ</name>
<proteinExistence type="inferred from homology"/>
<organism>
    <name type="scientific">Streptococcus pyogenes serotype M3 (strain SSI-1)</name>
    <dbReference type="NCBI Taxonomy" id="193567"/>
    <lineage>
        <taxon>Bacteria</taxon>
        <taxon>Bacillati</taxon>
        <taxon>Bacillota</taxon>
        <taxon>Bacilli</taxon>
        <taxon>Lactobacillales</taxon>
        <taxon>Streptococcaceae</taxon>
        <taxon>Streptococcus</taxon>
    </lineage>
</organism>
<reference key="1">
    <citation type="journal article" date="2003" name="Genome Res.">
        <title>Genome sequence of an M3 strain of Streptococcus pyogenes reveals a large-scale genomic rearrangement in invasive strains and new insights into phage evolution.</title>
        <authorList>
            <person name="Nakagawa I."/>
            <person name="Kurokawa K."/>
            <person name="Yamashita A."/>
            <person name="Nakata M."/>
            <person name="Tomiyasu Y."/>
            <person name="Okahashi N."/>
            <person name="Kawabata S."/>
            <person name="Yamazaki K."/>
            <person name="Shiba T."/>
            <person name="Yasunaga T."/>
            <person name="Hayashi H."/>
            <person name="Hattori M."/>
            <person name="Hamada S."/>
        </authorList>
    </citation>
    <scope>NUCLEOTIDE SEQUENCE [LARGE SCALE GENOMIC DNA]</scope>
    <source>
        <strain>SSI-1</strain>
    </source>
</reference>
<keyword id="KW-0963">Cytoplasm</keyword>
<keyword id="KW-0274">FAD</keyword>
<keyword id="KW-0285">Flavoprotein</keyword>
<keyword id="KW-0520">NAD</keyword>
<keyword id="KW-0819">tRNA processing</keyword>
<comment type="function">
    <text evidence="1">NAD-binding protein involved in the addition of a carboxymethylaminomethyl (cmnm) group at the wobble position (U34) of certain tRNAs, forming tRNA-cmnm(5)s(2)U34.</text>
</comment>
<comment type="cofactor">
    <cofactor evidence="1">
        <name>FAD</name>
        <dbReference type="ChEBI" id="CHEBI:57692"/>
    </cofactor>
</comment>
<comment type="subunit">
    <text evidence="1">Homodimer. Heterotetramer of two MnmE and two MnmG subunits.</text>
</comment>
<comment type="subcellular location">
    <subcellularLocation>
        <location evidence="1">Cytoplasm</location>
    </subcellularLocation>
</comment>
<comment type="similarity">
    <text evidence="1">Belongs to the MnmG family.</text>
</comment>
<gene>
    <name evidence="1" type="primary">mnmG</name>
    <name evidence="1" type="synonym">gidA</name>
    <name type="ordered locus">SPs1834</name>
</gene>
<protein>
    <recommendedName>
        <fullName evidence="1">tRNA uridine 5-carboxymethylaminomethyl modification enzyme MnmG</fullName>
    </recommendedName>
    <alternativeName>
        <fullName evidence="1">Glucose-inhibited division protein A</fullName>
    </alternativeName>
</protein>
<sequence>MTHEFTESYDVIVIGAGHAGVEASLATSRMGCKTLLATINLDMLAFMPCNPSIGGSAKGIVVREIDALGGEMGKNIDKTYIQMKMLNTGKGPAVRALRAQADKSLYAREMKHTVEKQANLTLRQTMIDDILVEDGRVVGVLTATGQKFAAKAVVVTTGTALRGEIILGELKYSSGPNNSLASVTLADNLKKLGLEIGRFKTGTPPRVKASSINYDQTEIQPGDDKPNHFSFMSKDADYLKDQIPCWLTYTNQTSHDIINQNLYRAPMFSGIVKGVGPRYCPSIEDKIVRFADKERHQLFLEPEGRDTEEVYVQGLSTSLPEDVQKDLIHSIKGLEKAEMMRTGYAIEYDIVLPHQLRATLETKLISGLFTAGQTNGTSGYEEAAGQGLIAGINAALKVQGKSELILKRSDAYIGVMIDDLVTKGTLEPYRLLTSRAEYRLILRHDNADMRLTEIGRDIGLVDDERWKAFEIKKNQFDNELKRLNSIKLKPVKATNDRVQELGFKPLTDAMTAKEFMRRPEIDYAIAVSFVGPAAEDLDAKIIELLETEIKYEGYIRKALDQVAKMKRMEEKRIPANIDWDAIDSIATEARQKFKKINPETIGQASRISGVNPADISILMIYLEGNGKAHRKY</sequence>
<accession>P0DB35</accession>
<accession>Q8K5H7</accession>
<evidence type="ECO:0000255" key="1">
    <source>
        <dbReference type="HAMAP-Rule" id="MF_00129"/>
    </source>
</evidence>
<dbReference type="EMBL" id="BA000034">
    <property type="protein sequence ID" value="BAC64929.1"/>
    <property type="molecule type" value="Genomic_DNA"/>
</dbReference>
<dbReference type="RefSeq" id="WP_011055105.1">
    <property type="nucleotide sequence ID" value="NC_004606.1"/>
</dbReference>
<dbReference type="SMR" id="P0DB35"/>
<dbReference type="KEGG" id="sps:SPs1834"/>
<dbReference type="HOGENOM" id="CLU_007831_2_2_9"/>
<dbReference type="GO" id="GO:0005829">
    <property type="term" value="C:cytosol"/>
    <property type="evidence" value="ECO:0007669"/>
    <property type="project" value="TreeGrafter"/>
</dbReference>
<dbReference type="GO" id="GO:0050660">
    <property type="term" value="F:flavin adenine dinucleotide binding"/>
    <property type="evidence" value="ECO:0007669"/>
    <property type="project" value="UniProtKB-UniRule"/>
</dbReference>
<dbReference type="GO" id="GO:0030488">
    <property type="term" value="P:tRNA methylation"/>
    <property type="evidence" value="ECO:0007669"/>
    <property type="project" value="TreeGrafter"/>
</dbReference>
<dbReference type="GO" id="GO:0002098">
    <property type="term" value="P:tRNA wobble uridine modification"/>
    <property type="evidence" value="ECO:0007669"/>
    <property type="project" value="InterPro"/>
</dbReference>
<dbReference type="FunFam" id="1.10.10.1800:FF:000001">
    <property type="entry name" value="tRNA uridine 5-carboxymethylaminomethyl modification enzyme MnmG"/>
    <property type="match status" value="1"/>
</dbReference>
<dbReference type="FunFam" id="1.10.150.570:FF:000001">
    <property type="entry name" value="tRNA uridine 5-carboxymethylaminomethyl modification enzyme MnmG"/>
    <property type="match status" value="1"/>
</dbReference>
<dbReference type="FunFam" id="3.50.50.60:FF:000002">
    <property type="entry name" value="tRNA uridine 5-carboxymethylaminomethyl modification enzyme MnmG"/>
    <property type="match status" value="1"/>
</dbReference>
<dbReference type="FunFam" id="3.50.50.60:FF:000063">
    <property type="entry name" value="tRNA uridine 5-carboxymethylaminomethyl modification enzyme MnmG"/>
    <property type="match status" value="1"/>
</dbReference>
<dbReference type="Gene3D" id="3.50.50.60">
    <property type="entry name" value="FAD/NAD(P)-binding domain"/>
    <property type="match status" value="2"/>
</dbReference>
<dbReference type="Gene3D" id="1.10.150.570">
    <property type="entry name" value="GidA associated domain, C-terminal subdomain"/>
    <property type="match status" value="1"/>
</dbReference>
<dbReference type="Gene3D" id="1.10.10.1800">
    <property type="entry name" value="tRNA uridine 5-carboxymethylaminomethyl modification enzyme MnmG/GidA"/>
    <property type="match status" value="1"/>
</dbReference>
<dbReference type="HAMAP" id="MF_00129">
    <property type="entry name" value="MnmG_GidA"/>
    <property type="match status" value="1"/>
</dbReference>
<dbReference type="InterPro" id="IPR036188">
    <property type="entry name" value="FAD/NAD-bd_sf"/>
</dbReference>
<dbReference type="InterPro" id="IPR049312">
    <property type="entry name" value="GIDA_C_N"/>
</dbReference>
<dbReference type="InterPro" id="IPR004416">
    <property type="entry name" value="MnmG"/>
</dbReference>
<dbReference type="InterPro" id="IPR002218">
    <property type="entry name" value="MnmG-rel"/>
</dbReference>
<dbReference type="InterPro" id="IPR020595">
    <property type="entry name" value="MnmG-rel_CS"/>
</dbReference>
<dbReference type="InterPro" id="IPR026904">
    <property type="entry name" value="MnmG_C"/>
</dbReference>
<dbReference type="InterPro" id="IPR047001">
    <property type="entry name" value="MnmG_C_subdom"/>
</dbReference>
<dbReference type="InterPro" id="IPR044920">
    <property type="entry name" value="MnmG_C_subdom_sf"/>
</dbReference>
<dbReference type="InterPro" id="IPR040131">
    <property type="entry name" value="MnmG_N"/>
</dbReference>
<dbReference type="NCBIfam" id="TIGR00136">
    <property type="entry name" value="mnmG_gidA"/>
    <property type="match status" value="1"/>
</dbReference>
<dbReference type="PANTHER" id="PTHR11806">
    <property type="entry name" value="GLUCOSE INHIBITED DIVISION PROTEIN A"/>
    <property type="match status" value="1"/>
</dbReference>
<dbReference type="PANTHER" id="PTHR11806:SF0">
    <property type="entry name" value="PROTEIN MTO1 HOMOLOG, MITOCHONDRIAL"/>
    <property type="match status" value="1"/>
</dbReference>
<dbReference type="Pfam" id="PF01134">
    <property type="entry name" value="GIDA"/>
    <property type="match status" value="1"/>
</dbReference>
<dbReference type="Pfam" id="PF21680">
    <property type="entry name" value="GIDA_C_1st"/>
    <property type="match status" value="1"/>
</dbReference>
<dbReference type="Pfam" id="PF13932">
    <property type="entry name" value="SAM_GIDA_C"/>
    <property type="match status" value="1"/>
</dbReference>
<dbReference type="PRINTS" id="PR00411">
    <property type="entry name" value="PNDRDTASEI"/>
</dbReference>
<dbReference type="SMART" id="SM01228">
    <property type="entry name" value="GIDA_assoc_3"/>
    <property type="match status" value="1"/>
</dbReference>
<dbReference type="SUPFAM" id="SSF51905">
    <property type="entry name" value="FAD/NAD(P)-binding domain"/>
    <property type="match status" value="1"/>
</dbReference>
<dbReference type="PROSITE" id="PS01280">
    <property type="entry name" value="GIDA_1"/>
    <property type="match status" value="1"/>
</dbReference>
<dbReference type="PROSITE" id="PS01281">
    <property type="entry name" value="GIDA_2"/>
    <property type="match status" value="1"/>
</dbReference>